<comment type="subcellular location">
    <subcellularLocation>
        <location evidence="2">Cell inner membrane</location>
        <topology evidence="2">Multi-pass membrane protein</topology>
    </subcellularLocation>
</comment>
<comment type="similarity">
    <text evidence="2">Belongs to the concentrative nucleoside transporter (CNT) (TC 2.A.41) family.</text>
</comment>
<gene>
    <name type="ordered locus">HI_0519</name>
</gene>
<keyword id="KW-0997">Cell inner membrane</keyword>
<keyword id="KW-1003">Cell membrane</keyword>
<keyword id="KW-0472">Membrane</keyword>
<keyword id="KW-1185">Reference proteome</keyword>
<keyword id="KW-0812">Transmembrane</keyword>
<keyword id="KW-1133">Transmembrane helix</keyword>
<keyword id="KW-0813">Transport</keyword>
<evidence type="ECO:0000255" key="1"/>
<evidence type="ECO:0000305" key="2"/>
<dbReference type="EMBL" id="L42023">
    <property type="protein sequence ID" value="AAC22177.1"/>
    <property type="molecule type" value="Genomic_DNA"/>
</dbReference>
<dbReference type="PIR" id="A64154">
    <property type="entry name" value="A64154"/>
</dbReference>
<dbReference type="RefSeq" id="NP_438677.1">
    <property type="nucleotide sequence ID" value="NC_000907.1"/>
</dbReference>
<dbReference type="SMR" id="P44742"/>
<dbReference type="STRING" id="71421.HI_0519"/>
<dbReference type="EnsemblBacteria" id="AAC22177">
    <property type="protein sequence ID" value="AAC22177"/>
    <property type="gene ID" value="HI_0519"/>
</dbReference>
<dbReference type="KEGG" id="hin:HI_0519"/>
<dbReference type="PATRIC" id="fig|71421.8.peg.538"/>
<dbReference type="eggNOG" id="COG1972">
    <property type="taxonomic scope" value="Bacteria"/>
</dbReference>
<dbReference type="HOGENOM" id="CLU_016813_4_2_6"/>
<dbReference type="OrthoDB" id="9766455at2"/>
<dbReference type="PhylomeDB" id="P44742"/>
<dbReference type="BioCyc" id="HINF71421:G1GJ1-532-MONOMER"/>
<dbReference type="Proteomes" id="UP000000579">
    <property type="component" value="Chromosome"/>
</dbReference>
<dbReference type="GO" id="GO:0005886">
    <property type="term" value="C:plasma membrane"/>
    <property type="evidence" value="ECO:0000318"/>
    <property type="project" value="GO_Central"/>
</dbReference>
<dbReference type="GO" id="GO:0005337">
    <property type="term" value="F:nucleoside transmembrane transporter activity"/>
    <property type="evidence" value="ECO:0000318"/>
    <property type="project" value="GO_Central"/>
</dbReference>
<dbReference type="GO" id="GO:0015293">
    <property type="term" value="F:symporter activity"/>
    <property type="evidence" value="ECO:0000318"/>
    <property type="project" value="GO_Central"/>
</dbReference>
<dbReference type="GO" id="GO:1901642">
    <property type="term" value="P:nucleoside transmembrane transport"/>
    <property type="evidence" value="ECO:0000318"/>
    <property type="project" value="GO_Central"/>
</dbReference>
<dbReference type="InterPro" id="IPR008276">
    <property type="entry name" value="C_nuclsd_transpt"/>
</dbReference>
<dbReference type="InterPro" id="IPR018270">
    <property type="entry name" value="C_nuclsd_transpt_met_bac"/>
</dbReference>
<dbReference type="InterPro" id="IPR011657">
    <property type="entry name" value="CNT_C_dom"/>
</dbReference>
<dbReference type="InterPro" id="IPR002668">
    <property type="entry name" value="CNT_N_dom"/>
</dbReference>
<dbReference type="InterPro" id="IPR011642">
    <property type="entry name" value="Gate_dom"/>
</dbReference>
<dbReference type="NCBIfam" id="TIGR00804">
    <property type="entry name" value="nupC"/>
    <property type="match status" value="1"/>
</dbReference>
<dbReference type="PANTHER" id="PTHR10590">
    <property type="entry name" value="SODIUM/NUCLEOSIDE COTRANSPORTER"/>
    <property type="match status" value="1"/>
</dbReference>
<dbReference type="PANTHER" id="PTHR10590:SF4">
    <property type="entry name" value="SOLUTE CARRIER FAMILY 28 MEMBER 3"/>
    <property type="match status" value="1"/>
</dbReference>
<dbReference type="Pfam" id="PF07670">
    <property type="entry name" value="Gate"/>
    <property type="match status" value="1"/>
</dbReference>
<dbReference type="Pfam" id="PF07662">
    <property type="entry name" value="Nucleos_tra2_C"/>
    <property type="match status" value="1"/>
</dbReference>
<dbReference type="Pfam" id="PF01773">
    <property type="entry name" value="Nucleos_tra2_N"/>
    <property type="match status" value="1"/>
</dbReference>
<sequence length="417" mass="42773">MSVLSSILGMVVLIAIAVLLSNNRKAISIRTVVGALAIQVGFAALILYVPAGKQALGAAADMVSNVIAYGNDGINFVFGGLADPSKPSGFIFAVKVLPIIVFFSGLISVLYYLGIMQVVIKVLGGALQKALGTSKAESMSAAANIFVGQTEAPLVVRPYIKNMTQSELFAIMVGGTASIAGSVMAGYAGMGVPLTYLIAASFMAAPAGLLFAKLMFPQTEQFTDKQPEDNDSEKPTNVLEAMAGGASAGMQLALNVGAMLIAFVGLIALINGILSGVGGWFGYGDLTLQSIFGLIFKPLAYLIGVTDGAEAGIAGQMIGMKLAVNEFVGYLEFAKYLQPDSAIVLTEKTKAIITFALCGFANFSSIAILIGGLGGMAPSRRSDVARLGIKAVIAGTLANLMSATIAGLFIGLGAAAL</sequence>
<accession>P44742</accession>
<name>Y519_HAEIN</name>
<proteinExistence type="inferred from homology"/>
<protein>
    <recommendedName>
        <fullName>Uncharacterized transporter HI_0519</fullName>
    </recommendedName>
</protein>
<reference key="1">
    <citation type="journal article" date="1995" name="Science">
        <title>Whole-genome random sequencing and assembly of Haemophilus influenzae Rd.</title>
        <authorList>
            <person name="Fleischmann R.D."/>
            <person name="Adams M.D."/>
            <person name="White O."/>
            <person name="Clayton R.A."/>
            <person name="Kirkness E.F."/>
            <person name="Kerlavage A.R."/>
            <person name="Bult C.J."/>
            <person name="Tomb J.-F."/>
            <person name="Dougherty B.A."/>
            <person name="Merrick J.M."/>
            <person name="McKenney K."/>
            <person name="Sutton G.G."/>
            <person name="FitzHugh W."/>
            <person name="Fields C.A."/>
            <person name="Gocayne J.D."/>
            <person name="Scott J.D."/>
            <person name="Shirley R."/>
            <person name="Liu L.-I."/>
            <person name="Glodek A."/>
            <person name="Kelley J.M."/>
            <person name="Weidman J.F."/>
            <person name="Phillips C.A."/>
            <person name="Spriggs T."/>
            <person name="Hedblom E."/>
            <person name="Cotton M.D."/>
            <person name="Utterback T.R."/>
            <person name="Hanna M.C."/>
            <person name="Nguyen D.T."/>
            <person name="Saudek D.M."/>
            <person name="Brandon R.C."/>
            <person name="Fine L.D."/>
            <person name="Fritchman J.L."/>
            <person name="Fuhrmann J.L."/>
            <person name="Geoghagen N.S.M."/>
            <person name="Gnehm C.L."/>
            <person name="McDonald L.A."/>
            <person name="Small K.V."/>
            <person name="Fraser C.M."/>
            <person name="Smith H.O."/>
            <person name="Venter J.C."/>
        </authorList>
    </citation>
    <scope>NUCLEOTIDE SEQUENCE [LARGE SCALE GENOMIC DNA]</scope>
    <source>
        <strain>ATCC 51907 / DSM 11121 / KW20 / Rd</strain>
    </source>
</reference>
<feature type="chain" id="PRO_0000070459" description="Uncharacterized transporter HI_0519">
    <location>
        <begin position="1"/>
        <end position="417"/>
    </location>
</feature>
<feature type="transmembrane region" description="Helical" evidence="1">
    <location>
        <begin position="1"/>
        <end position="21"/>
    </location>
</feature>
<feature type="transmembrane region" description="Helical" evidence="1">
    <location>
        <begin position="32"/>
        <end position="52"/>
    </location>
</feature>
<feature type="transmembrane region" description="Helical" evidence="1">
    <location>
        <begin position="96"/>
        <end position="116"/>
    </location>
</feature>
<feature type="transmembrane region" description="Helical" evidence="1">
    <location>
        <begin position="168"/>
        <end position="188"/>
    </location>
</feature>
<feature type="transmembrane region" description="Helical" evidence="1">
    <location>
        <begin position="192"/>
        <end position="212"/>
    </location>
</feature>
<feature type="transmembrane region" description="Helical" evidence="1">
    <location>
        <begin position="261"/>
        <end position="281"/>
    </location>
</feature>
<feature type="transmembrane region" description="Helical" evidence="1">
    <location>
        <begin position="286"/>
        <end position="306"/>
    </location>
</feature>
<feature type="transmembrane region" description="Helical" evidence="1">
    <location>
        <begin position="351"/>
        <end position="371"/>
    </location>
</feature>
<feature type="transmembrane region" description="Helical" evidence="1">
    <location>
        <begin position="392"/>
        <end position="412"/>
    </location>
</feature>
<organism>
    <name type="scientific">Haemophilus influenzae (strain ATCC 51907 / DSM 11121 / KW20 / Rd)</name>
    <dbReference type="NCBI Taxonomy" id="71421"/>
    <lineage>
        <taxon>Bacteria</taxon>
        <taxon>Pseudomonadati</taxon>
        <taxon>Pseudomonadota</taxon>
        <taxon>Gammaproteobacteria</taxon>
        <taxon>Pasteurellales</taxon>
        <taxon>Pasteurellaceae</taxon>
        <taxon>Haemophilus</taxon>
    </lineage>
</organism>